<dbReference type="EC" id="2.7.7.48"/>
<dbReference type="EMBL" id="X14136">
    <property type="protein sequence ID" value="CAA32356.1"/>
    <property type="molecule type" value="mRNA"/>
</dbReference>
<dbReference type="PIR" id="S04723">
    <property type="entry name" value="S04723"/>
</dbReference>
<dbReference type="SMR" id="P11897"/>
<dbReference type="GO" id="GO:0019028">
    <property type="term" value="C:viral capsid"/>
    <property type="evidence" value="ECO:0007669"/>
    <property type="project" value="UniProtKB-KW"/>
</dbReference>
<dbReference type="GO" id="GO:0003968">
    <property type="term" value="F:RNA-directed RNA polymerase activity"/>
    <property type="evidence" value="ECO:0007669"/>
    <property type="project" value="UniProtKB-KW"/>
</dbReference>
<dbReference type="InterPro" id="IPR001592">
    <property type="entry name" value="Poty_coat"/>
</dbReference>
<dbReference type="Pfam" id="PF00767">
    <property type="entry name" value="Poty_coat"/>
    <property type="match status" value="1"/>
</dbReference>
<name>POLG_PVYYO</name>
<comment type="function">
    <molecule>Nuclear inclusion protein B</molecule>
    <text>An RNA-dependent RNA polymerase that plays an essential role in the virus replication.</text>
</comment>
<comment type="function">
    <molecule>Capsid protein</molecule>
    <text evidence="2">Involved in aphid transmission, cell-to-cell and systemis movement, encapsidation of the viral RNA and in the regulation of viral RNA amplification.</text>
</comment>
<comment type="catalytic activity">
    <reaction evidence="3">
        <text>RNA(n) + a ribonucleoside 5'-triphosphate = RNA(n+1) + diphosphate</text>
        <dbReference type="Rhea" id="RHEA:21248"/>
        <dbReference type="Rhea" id="RHEA-COMP:14527"/>
        <dbReference type="Rhea" id="RHEA-COMP:17342"/>
        <dbReference type="ChEBI" id="CHEBI:33019"/>
        <dbReference type="ChEBI" id="CHEBI:61557"/>
        <dbReference type="ChEBI" id="CHEBI:140395"/>
        <dbReference type="EC" id="2.7.7.48"/>
    </reaction>
</comment>
<comment type="subcellular location">
    <molecule>Capsid protein</molecule>
    <subcellularLocation>
        <location evidence="5">Virion</location>
    </subcellularLocation>
</comment>
<comment type="PTM">
    <text evidence="1">Genome polyprotein of potyviruses undergoes post-translational proteolytic processing by the main proteinase NIa-pro resulting in the production of at least ten individual proteins. The P1 proteinase and the HC-pro cleave only their respective C-termini autocatalytically. 6K1 is essential for proper proteolytic separation of P3 from CI (By similarity).</text>
</comment>
<comment type="similarity">
    <text evidence="5">Belongs to the potyviridae genome polyprotein family.</text>
</comment>
<keyword id="KW-0167">Capsid protein</keyword>
<keyword id="KW-0548">Nucleotidyltransferase</keyword>
<keyword id="KW-0696">RNA-directed RNA polymerase</keyword>
<keyword id="KW-0808">Transferase</keyword>
<keyword id="KW-0946">Virion</keyword>
<feature type="chain" id="PRO_0000040423" description="Nuclear inclusion protein B" evidence="1">
    <location>
        <begin position="1" status="less than"/>
        <end position="17"/>
    </location>
</feature>
<feature type="chain" id="PRO_0000420020" description="Genome polyprotein">
    <location>
        <begin position="1"/>
        <end position="284"/>
    </location>
</feature>
<feature type="chain" id="PRO_0000040424" description="Capsid protein" evidence="1">
    <location>
        <begin position="18"/>
        <end position="284"/>
    </location>
</feature>
<feature type="region of interest" description="Disordered" evidence="4">
    <location>
        <begin position="16"/>
        <end position="57"/>
    </location>
</feature>
<feature type="region of interest" description="Disordered" evidence="4">
    <location>
        <begin position="255"/>
        <end position="284"/>
    </location>
</feature>
<feature type="compositionally biased region" description="Polar residues" evidence="4">
    <location>
        <begin position="35"/>
        <end position="44"/>
    </location>
</feature>
<feature type="site" description="Cleavage; by NIa-pro" evidence="1">
    <location>
        <begin position="17"/>
        <end position="18"/>
    </location>
</feature>
<feature type="non-terminal residue">
    <location>
        <position position="1"/>
    </location>
</feature>
<proteinExistence type="evidence at transcript level"/>
<protein>
    <recommendedName>
        <fullName>Genome polyprotein</fullName>
    </recommendedName>
    <component>
        <recommendedName>
            <fullName>Nuclear inclusion protein B</fullName>
            <shortName>NI-B</shortName>
            <shortName>NIB</shortName>
        </recommendedName>
        <alternativeName>
            <fullName>RNA-directed RNA polymerase</fullName>
            <ecNumber>2.7.7.48</ecNumber>
        </alternativeName>
    </component>
    <component>
        <recommendedName>
            <fullName>Capsid protein</fullName>
            <shortName>CP</shortName>
        </recommendedName>
        <alternativeName>
            <fullName>Coat protein</fullName>
        </alternativeName>
    </component>
</protein>
<organismHost>
    <name type="scientific">Capsicum</name>
    <name type="common">peppers</name>
    <dbReference type="NCBI Taxonomy" id="4071"/>
</organismHost>
<organismHost>
    <name type="scientific">Nicotiana</name>
    <dbReference type="NCBI Taxonomy" id="4085"/>
</organismHost>
<organismHost>
    <name type="scientific">Solanum lycopersicum</name>
    <name type="common">Tomato</name>
    <name type="synonym">Lycopersicon esculentum</name>
    <dbReference type="NCBI Taxonomy" id="4081"/>
</organismHost>
<organismHost>
    <name type="scientific">Solanum tuberosum</name>
    <name type="common">Potato</name>
    <dbReference type="NCBI Taxonomy" id="4113"/>
</organismHost>
<reference key="1">
    <citation type="journal article" date="1989" name="Nucleic Acids Res.">
        <title>Nucleotide cDNA sequence coding for the PVYo coat protein.</title>
        <authorList>
            <person name="Bravo-Almonacid F.F."/>
            <person name="Mentaberry A.N."/>
        </authorList>
    </citation>
    <scope>NUCLEOTIDE SEQUENCE [MRNA]</scope>
</reference>
<reference key="2">
    <citation type="journal article" date="2001" name="Virus Res.">
        <title>Potyvirus proteins: a wealth of functions.</title>
        <authorList>
            <person name="Urcuqui-Inchima S."/>
            <person name="Haenni A.L."/>
            <person name="Bernardi F."/>
        </authorList>
    </citation>
    <scope>REVIEW</scope>
</reference>
<evidence type="ECO:0000250" key="1"/>
<evidence type="ECO:0000250" key="2">
    <source>
        <dbReference type="UniProtKB" id="P04517"/>
    </source>
</evidence>
<evidence type="ECO:0000255" key="3">
    <source>
        <dbReference type="PROSITE-ProRule" id="PRU00539"/>
    </source>
</evidence>
<evidence type="ECO:0000256" key="4">
    <source>
        <dbReference type="SAM" id="MobiDB-lite"/>
    </source>
</evidence>
<evidence type="ECO:0000305" key="5"/>
<sequence>VALDDEFEFDSYEVHHQANDTIDAGGNNKKDAKPEQSSIQSNLSKGKDKDVNVGTSGTHTVPRIKAITSKMRMPRSKGVAALNLEHLLEYAPQQIDISNTRATQSQFDTWYEAVRMAYDIGQTEMPTVMNGLMVWCIENGTSPNINGVWVMMDGNEQVEYPLKPIVENAKPTLRQIMAHFSDVAEAYIEMRNKKEPYMPRYGLIRNLRDISLARYAFDFYEVTSRTPVRAREAHIQMKAAALKSAQPRLFGLDGGISTQEENTERHTTEDVSPSMHTLLGGKNM</sequence>
<accession>P11897</accession>
<organism>
    <name type="scientific">Potato virus Y (strain Yo)</name>
    <name type="common">PVY</name>
    <dbReference type="NCBI Taxonomy" id="12221"/>
    <lineage>
        <taxon>Viruses</taxon>
        <taxon>Riboviria</taxon>
        <taxon>Orthornavirae</taxon>
        <taxon>Pisuviricota</taxon>
        <taxon>Stelpaviricetes</taxon>
        <taxon>Patatavirales</taxon>
        <taxon>Potyviridae</taxon>
        <taxon>Potyvirus</taxon>
        <taxon>Potyvirus yituberosi</taxon>
        <taxon>Potato virus Y</taxon>
    </lineage>
</organism>